<feature type="chain" id="PRO_0000198151" description="Ribosomal RNA large subunit methyltransferase H">
    <location>
        <begin position="1"/>
        <end position="156"/>
    </location>
</feature>
<feature type="binding site" evidence="1">
    <location>
        <position position="73"/>
    </location>
    <ligand>
        <name>S-adenosyl-L-methionine</name>
        <dbReference type="ChEBI" id="CHEBI:59789"/>
    </ligand>
</feature>
<feature type="binding site" evidence="1">
    <location>
        <position position="104"/>
    </location>
    <ligand>
        <name>S-adenosyl-L-methionine</name>
        <dbReference type="ChEBI" id="CHEBI:59789"/>
    </ligand>
</feature>
<feature type="binding site" evidence="1">
    <location>
        <begin position="123"/>
        <end position="128"/>
    </location>
    <ligand>
        <name>S-adenosyl-L-methionine</name>
        <dbReference type="ChEBI" id="CHEBI:59789"/>
    </ligand>
</feature>
<evidence type="ECO:0000255" key="1">
    <source>
        <dbReference type="HAMAP-Rule" id="MF_00658"/>
    </source>
</evidence>
<sequence length="156" mass="17510">MNITVLAVGTKMPRWVDEAVAEYAKRFGRDVAYALKEIKPEKRGAGVNAAQGMAAEEKRILEAIPQGAFLVVLDERGKAPTSVELAEHLKSWRQNGEHVCFVIGGADGMTDRLKQQARMMMRLSSLTLPHGMVRVFLTEQLYRAVSILHNHPYHRE</sequence>
<proteinExistence type="inferred from homology"/>
<accession>P67519</accession>
<accession>Q9JR59</accession>
<gene>
    <name evidence="1" type="primary">rlmH</name>
    <name type="ordered locus">NMB2022</name>
</gene>
<reference key="1">
    <citation type="journal article" date="2000" name="Science">
        <title>Complete genome sequence of Neisseria meningitidis serogroup B strain MC58.</title>
        <authorList>
            <person name="Tettelin H."/>
            <person name="Saunders N.J."/>
            <person name="Heidelberg J.F."/>
            <person name="Jeffries A.C."/>
            <person name="Nelson K.E."/>
            <person name="Eisen J.A."/>
            <person name="Ketchum K.A."/>
            <person name="Hood D.W."/>
            <person name="Peden J.F."/>
            <person name="Dodson R.J."/>
            <person name="Nelson W.C."/>
            <person name="Gwinn M.L."/>
            <person name="DeBoy R.T."/>
            <person name="Peterson J.D."/>
            <person name="Hickey E.K."/>
            <person name="Haft D.H."/>
            <person name="Salzberg S.L."/>
            <person name="White O."/>
            <person name="Fleischmann R.D."/>
            <person name="Dougherty B.A."/>
            <person name="Mason T.M."/>
            <person name="Ciecko A."/>
            <person name="Parksey D.S."/>
            <person name="Blair E."/>
            <person name="Cittone H."/>
            <person name="Clark E.B."/>
            <person name="Cotton M.D."/>
            <person name="Utterback T.R."/>
            <person name="Khouri H.M."/>
            <person name="Qin H."/>
            <person name="Vamathevan J.J."/>
            <person name="Gill J."/>
            <person name="Scarlato V."/>
            <person name="Masignani V."/>
            <person name="Pizza M."/>
            <person name="Grandi G."/>
            <person name="Sun L."/>
            <person name="Smith H.O."/>
            <person name="Fraser C.M."/>
            <person name="Moxon E.R."/>
            <person name="Rappuoli R."/>
            <person name="Venter J.C."/>
        </authorList>
    </citation>
    <scope>NUCLEOTIDE SEQUENCE [LARGE SCALE GENOMIC DNA]</scope>
    <source>
        <strain>ATCC BAA-335 / MC58</strain>
    </source>
</reference>
<keyword id="KW-0963">Cytoplasm</keyword>
<keyword id="KW-0489">Methyltransferase</keyword>
<keyword id="KW-1185">Reference proteome</keyword>
<keyword id="KW-0698">rRNA processing</keyword>
<keyword id="KW-0949">S-adenosyl-L-methionine</keyword>
<keyword id="KW-0808">Transferase</keyword>
<comment type="function">
    <text evidence="1">Specifically methylates the pseudouridine at position 1915 (m3Psi1915) in 23S rRNA.</text>
</comment>
<comment type="catalytic activity">
    <reaction evidence="1">
        <text>pseudouridine(1915) in 23S rRNA + S-adenosyl-L-methionine = N(3)-methylpseudouridine(1915) in 23S rRNA + S-adenosyl-L-homocysteine + H(+)</text>
        <dbReference type="Rhea" id="RHEA:42752"/>
        <dbReference type="Rhea" id="RHEA-COMP:10221"/>
        <dbReference type="Rhea" id="RHEA-COMP:10222"/>
        <dbReference type="ChEBI" id="CHEBI:15378"/>
        <dbReference type="ChEBI" id="CHEBI:57856"/>
        <dbReference type="ChEBI" id="CHEBI:59789"/>
        <dbReference type="ChEBI" id="CHEBI:65314"/>
        <dbReference type="ChEBI" id="CHEBI:74486"/>
        <dbReference type="EC" id="2.1.1.177"/>
    </reaction>
</comment>
<comment type="subunit">
    <text evidence="1">Homodimer.</text>
</comment>
<comment type="subcellular location">
    <subcellularLocation>
        <location evidence="1">Cytoplasm</location>
    </subcellularLocation>
</comment>
<comment type="similarity">
    <text evidence="1">Belongs to the RNA methyltransferase RlmH family.</text>
</comment>
<dbReference type="EC" id="2.1.1.177" evidence="1"/>
<dbReference type="EMBL" id="AE002098">
    <property type="protein sequence ID" value="AAF42345.1"/>
    <property type="molecule type" value="Genomic_DNA"/>
</dbReference>
<dbReference type="PIR" id="A81015">
    <property type="entry name" value="A81015"/>
</dbReference>
<dbReference type="RefSeq" id="NP_275014.1">
    <property type="nucleotide sequence ID" value="NC_003112.2"/>
</dbReference>
<dbReference type="RefSeq" id="WP_002225675.1">
    <property type="nucleotide sequence ID" value="NC_003112.2"/>
</dbReference>
<dbReference type="SMR" id="P67519"/>
<dbReference type="FunCoup" id="P67519">
    <property type="interactions" value="350"/>
</dbReference>
<dbReference type="STRING" id="122586.NMB2022"/>
<dbReference type="PaxDb" id="122586-NMB2022"/>
<dbReference type="KEGG" id="nme:NMB2022"/>
<dbReference type="PATRIC" id="fig|122586.8.peg.2579"/>
<dbReference type="HOGENOM" id="CLU_100552_1_0_4"/>
<dbReference type="InParanoid" id="P67519"/>
<dbReference type="OrthoDB" id="9806643at2"/>
<dbReference type="Proteomes" id="UP000000425">
    <property type="component" value="Chromosome"/>
</dbReference>
<dbReference type="GO" id="GO:0005737">
    <property type="term" value="C:cytoplasm"/>
    <property type="evidence" value="ECO:0007669"/>
    <property type="project" value="UniProtKB-SubCell"/>
</dbReference>
<dbReference type="GO" id="GO:0070038">
    <property type="term" value="F:rRNA (pseudouridine-N3-)-methyltransferase activity"/>
    <property type="evidence" value="ECO:0007669"/>
    <property type="project" value="UniProtKB-UniRule"/>
</dbReference>
<dbReference type="CDD" id="cd18081">
    <property type="entry name" value="RlmH-like"/>
    <property type="match status" value="1"/>
</dbReference>
<dbReference type="Gene3D" id="3.40.1280.10">
    <property type="match status" value="1"/>
</dbReference>
<dbReference type="HAMAP" id="MF_00658">
    <property type="entry name" value="23SrRNA_methyltr_H"/>
    <property type="match status" value="1"/>
</dbReference>
<dbReference type="InterPro" id="IPR029028">
    <property type="entry name" value="Alpha/beta_knot_MTases"/>
</dbReference>
<dbReference type="InterPro" id="IPR003742">
    <property type="entry name" value="RlmH-like"/>
</dbReference>
<dbReference type="InterPro" id="IPR029026">
    <property type="entry name" value="tRNA_m1G_MTases_N"/>
</dbReference>
<dbReference type="NCBIfam" id="NF000986">
    <property type="entry name" value="PRK00103.1-4"/>
    <property type="match status" value="1"/>
</dbReference>
<dbReference type="PANTHER" id="PTHR33603">
    <property type="entry name" value="METHYLTRANSFERASE"/>
    <property type="match status" value="1"/>
</dbReference>
<dbReference type="PANTHER" id="PTHR33603:SF1">
    <property type="entry name" value="RIBOSOMAL RNA LARGE SUBUNIT METHYLTRANSFERASE H"/>
    <property type="match status" value="1"/>
</dbReference>
<dbReference type="Pfam" id="PF02590">
    <property type="entry name" value="SPOUT_MTase"/>
    <property type="match status" value="1"/>
</dbReference>
<dbReference type="PIRSF" id="PIRSF004505">
    <property type="entry name" value="MT_bac"/>
    <property type="match status" value="1"/>
</dbReference>
<dbReference type="SUPFAM" id="SSF75217">
    <property type="entry name" value="alpha/beta knot"/>
    <property type="match status" value="1"/>
</dbReference>
<name>RLMH_NEIMB</name>
<protein>
    <recommendedName>
        <fullName evidence="1">Ribosomal RNA large subunit methyltransferase H</fullName>
        <ecNumber evidence="1">2.1.1.177</ecNumber>
    </recommendedName>
    <alternativeName>
        <fullName evidence="1">23S rRNA (pseudouridine1915-N3)-methyltransferase</fullName>
    </alternativeName>
    <alternativeName>
        <fullName evidence="1">23S rRNA m3Psi1915 methyltransferase</fullName>
    </alternativeName>
    <alternativeName>
        <fullName evidence="1">rRNA (pseudouridine-N3-)-methyltransferase RlmH</fullName>
    </alternativeName>
</protein>
<organism>
    <name type="scientific">Neisseria meningitidis serogroup B (strain ATCC BAA-335 / MC58)</name>
    <dbReference type="NCBI Taxonomy" id="122586"/>
    <lineage>
        <taxon>Bacteria</taxon>
        <taxon>Pseudomonadati</taxon>
        <taxon>Pseudomonadota</taxon>
        <taxon>Betaproteobacteria</taxon>
        <taxon>Neisseriales</taxon>
        <taxon>Neisseriaceae</taxon>
        <taxon>Neisseria</taxon>
    </lineage>
</organism>